<evidence type="ECO:0000255" key="1">
    <source>
        <dbReference type="HAMAP-Rule" id="MF_00362"/>
    </source>
</evidence>
<evidence type="ECO:0000305" key="2"/>
<name>RL10_STAAT</name>
<protein>
    <recommendedName>
        <fullName evidence="1">Large ribosomal subunit protein uL10</fullName>
    </recommendedName>
    <alternativeName>
        <fullName evidence="2">50S ribosomal protein L10</fullName>
    </alternativeName>
</protein>
<sequence length="166" mass="17710">MSAIIEAKKQLVDEIAEVLSNSVSTVIVDYRGLTVAEVTDLRSQLREAGVEYKVYKNTMVRRAAEKAGIEGLDEFLTGPTAIATSSEDAVAAAKVISGFAKDHEALEIKSGVMEGNVITAEEVKTVGSLPSHDGLVSMLLSVLQAPVRNFAYAVKAIGEQKEENAE</sequence>
<accession>A8YZN7</accession>
<keyword id="KW-0687">Ribonucleoprotein</keyword>
<keyword id="KW-0689">Ribosomal protein</keyword>
<keyword id="KW-0694">RNA-binding</keyword>
<keyword id="KW-0699">rRNA-binding</keyword>
<comment type="function">
    <text evidence="1">Forms part of the ribosomal stalk, playing a central role in the interaction of the ribosome with GTP-bound translation factors.</text>
</comment>
<comment type="subunit">
    <text evidence="1">Part of the ribosomal stalk of the 50S ribosomal subunit. The N-terminus interacts with L11 and the large rRNA to form the base of the stalk. The C-terminus forms an elongated spine to which L12 dimers bind in a sequential fashion forming a multimeric L10(L12)X complex.</text>
</comment>
<comment type="similarity">
    <text evidence="1">Belongs to the universal ribosomal protein uL10 family.</text>
</comment>
<organism>
    <name type="scientific">Staphylococcus aureus (strain USA300 / TCH1516)</name>
    <dbReference type="NCBI Taxonomy" id="451516"/>
    <lineage>
        <taxon>Bacteria</taxon>
        <taxon>Bacillati</taxon>
        <taxon>Bacillota</taxon>
        <taxon>Bacilli</taxon>
        <taxon>Bacillales</taxon>
        <taxon>Staphylococcaceae</taxon>
        <taxon>Staphylococcus</taxon>
    </lineage>
</organism>
<proteinExistence type="inferred from homology"/>
<gene>
    <name evidence="1" type="primary">rplJ</name>
    <name type="ordered locus">USA300HOU_0533</name>
</gene>
<reference key="1">
    <citation type="journal article" date="2007" name="BMC Microbiol.">
        <title>Subtle genetic changes enhance virulence of methicillin resistant and sensitive Staphylococcus aureus.</title>
        <authorList>
            <person name="Highlander S.K."/>
            <person name="Hulten K.G."/>
            <person name="Qin X."/>
            <person name="Jiang H."/>
            <person name="Yerrapragada S."/>
            <person name="Mason E.O. Jr."/>
            <person name="Shang Y."/>
            <person name="Williams T.M."/>
            <person name="Fortunov R.M."/>
            <person name="Liu Y."/>
            <person name="Igboeli O."/>
            <person name="Petrosino J."/>
            <person name="Tirumalai M."/>
            <person name="Uzman A."/>
            <person name="Fox G.E."/>
            <person name="Cardenas A.M."/>
            <person name="Muzny D.M."/>
            <person name="Hemphill L."/>
            <person name="Ding Y."/>
            <person name="Dugan S."/>
            <person name="Blyth P.R."/>
            <person name="Buhay C.J."/>
            <person name="Dinh H.H."/>
            <person name="Hawes A.C."/>
            <person name="Holder M."/>
            <person name="Kovar C.L."/>
            <person name="Lee S.L."/>
            <person name="Liu W."/>
            <person name="Nazareth L.V."/>
            <person name="Wang Q."/>
            <person name="Zhou J."/>
            <person name="Kaplan S.L."/>
            <person name="Weinstock G.M."/>
        </authorList>
    </citation>
    <scope>NUCLEOTIDE SEQUENCE [LARGE SCALE GENOMIC DNA]</scope>
    <source>
        <strain>USA300 / TCH1516</strain>
    </source>
</reference>
<dbReference type="EMBL" id="CP000730">
    <property type="protein sequence ID" value="ABX28559.1"/>
    <property type="molecule type" value="Genomic_DNA"/>
</dbReference>
<dbReference type="RefSeq" id="WP_001273085.1">
    <property type="nucleotide sequence ID" value="NC_010079.1"/>
</dbReference>
<dbReference type="SMR" id="A8YZN7"/>
<dbReference type="KEGG" id="sax:USA300HOU_0533"/>
<dbReference type="HOGENOM" id="CLU_092227_2_0_9"/>
<dbReference type="GO" id="GO:0015934">
    <property type="term" value="C:large ribosomal subunit"/>
    <property type="evidence" value="ECO:0007669"/>
    <property type="project" value="InterPro"/>
</dbReference>
<dbReference type="GO" id="GO:0070180">
    <property type="term" value="F:large ribosomal subunit rRNA binding"/>
    <property type="evidence" value="ECO:0007669"/>
    <property type="project" value="UniProtKB-UniRule"/>
</dbReference>
<dbReference type="GO" id="GO:0003735">
    <property type="term" value="F:structural constituent of ribosome"/>
    <property type="evidence" value="ECO:0007669"/>
    <property type="project" value="InterPro"/>
</dbReference>
<dbReference type="GO" id="GO:0006412">
    <property type="term" value="P:translation"/>
    <property type="evidence" value="ECO:0007669"/>
    <property type="project" value="UniProtKB-UniRule"/>
</dbReference>
<dbReference type="CDD" id="cd05797">
    <property type="entry name" value="Ribosomal_L10"/>
    <property type="match status" value="1"/>
</dbReference>
<dbReference type="FunFam" id="3.30.70.1730:FF:000001">
    <property type="entry name" value="50S ribosomal protein L10"/>
    <property type="match status" value="1"/>
</dbReference>
<dbReference type="Gene3D" id="3.30.70.1730">
    <property type="match status" value="1"/>
</dbReference>
<dbReference type="Gene3D" id="6.10.250.290">
    <property type="match status" value="1"/>
</dbReference>
<dbReference type="HAMAP" id="MF_00362">
    <property type="entry name" value="Ribosomal_uL10"/>
    <property type="match status" value="1"/>
</dbReference>
<dbReference type="InterPro" id="IPR001790">
    <property type="entry name" value="Ribosomal_uL10"/>
</dbReference>
<dbReference type="InterPro" id="IPR043141">
    <property type="entry name" value="Ribosomal_uL10-like_sf"/>
</dbReference>
<dbReference type="InterPro" id="IPR022973">
    <property type="entry name" value="Ribosomal_uL10_bac"/>
</dbReference>
<dbReference type="InterPro" id="IPR047865">
    <property type="entry name" value="Ribosomal_uL10_bac_type"/>
</dbReference>
<dbReference type="InterPro" id="IPR002363">
    <property type="entry name" value="Ribosomal_uL10_CS_bac"/>
</dbReference>
<dbReference type="NCBIfam" id="NF000955">
    <property type="entry name" value="PRK00099.1-1"/>
    <property type="match status" value="1"/>
</dbReference>
<dbReference type="PANTHER" id="PTHR11560">
    <property type="entry name" value="39S RIBOSOMAL PROTEIN L10, MITOCHONDRIAL"/>
    <property type="match status" value="1"/>
</dbReference>
<dbReference type="Pfam" id="PF00466">
    <property type="entry name" value="Ribosomal_L10"/>
    <property type="match status" value="1"/>
</dbReference>
<dbReference type="SUPFAM" id="SSF160369">
    <property type="entry name" value="Ribosomal protein L10-like"/>
    <property type="match status" value="1"/>
</dbReference>
<dbReference type="PROSITE" id="PS01109">
    <property type="entry name" value="RIBOSOMAL_L10"/>
    <property type="match status" value="1"/>
</dbReference>
<feature type="chain" id="PRO_1000079567" description="Large ribosomal subunit protein uL10">
    <location>
        <begin position="1"/>
        <end position="166"/>
    </location>
</feature>